<name>SPEH_METVS</name>
<feature type="chain" id="PRO_1000013678" description="S-adenosylmethionine decarboxylase beta chain" evidence="1">
    <location>
        <begin position="1"/>
        <end position="62"/>
    </location>
</feature>
<feature type="chain" id="PRO_0000315040" description="S-adenosylmethionine decarboxylase alpha chain" evidence="1">
    <location>
        <begin position="63"/>
        <end position="122"/>
    </location>
</feature>
<feature type="active site" description="Schiff-base intermediate with substrate; via pyruvic acid" evidence="1">
    <location>
        <position position="63"/>
    </location>
</feature>
<feature type="active site" description="Proton acceptor; for processing activity" evidence="1">
    <location>
        <position position="68"/>
    </location>
</feature>
<feature type="active site" description="Proton donor; for catalytic activity" evidence="1">
    <location>
        <position position="83"/>
    </location>
</feature>
<feature type="site" description="Cleavage (non-hydrolytic); by autolysis" evidence="1">
    <location>
        <begin position="62"/>
        <end position="63"/>
    </location>
</feature>
<feature type="modified residue" description="Pyruvic acid (Ser); by autocatalysis" evidence="1">
    <location>
        <position position="63"/>
    </location>
</feature>
<comment type="function">
    <text evidence="1">Catalyzes the decarboxylation of S-adenosylmethionine to S-adenosylmethioninamine (dcAdoMet), the propylamine donor required for the synthesis of the polyamines spermine and spermidine from the diamine putrescine.</text>
</comment>
<comment type="catalytic activity">
    <reaction evidence="1">
        <text>S-adenosyl-L-methionine + H(+) = S-adenosyl 3-(methylsulfanyl)propylamine + CO2</text>
        <dbReference type="Rhea" id="RHEA:15981"/>
        <dbReference type="ChEBI" id="CHEBI:15378"/>
        <dbReference type="ChEBI" id="CHEBI:16526"/>
        <dbReference type="ChEBI" id="CHEBI:57443"/>
        <dbReference type="ChEBI" id="CHEBI:59789"/>
        <dbReference type="EC" id="4.1.1.50"/>
    </reaction>
</comment>
<comment type="cofactor">
    <cofactor evidence="1">
        <name>pyruvate</name>
        <dbReference type="ChEBI" id="CHEBI:15361"/>
    </cofactor>
    <text evidence="1">Binds 1 pyruvoyl group covalently per subunit.</text>
</comment>
<comment type="pathway">
    <text evidence="1">Amine and polyamine biosynthesis; S-adenosylmethioninamine biosynthesis; S-adenosylmethioninamine from S-adenosyl-L-methionine: step 1/1.</text>
</comment>
<comment type="subunit">
    <text evidence="1">Heterotetramer of two alpha and two beta chains arranged as a dimer of alpha/beta heterodimers.</text>
</comment>
<comment type="PTM">
    <text evidence="1">Is synthesized initially as an inactive proenzyme. Formation of the active enzyme involves a self-maturation process in which the active site pyruvoyl group is generated from an internal serine residue via an autocatalytic post-translational modification. Two non-identical subunits are generated from the proenzyme in this reaction, and the pyruvate is formed at the N-terminus of the alpha chain, which is derived from the carboxyl end of the proenzyme. The post-translation cleavage follows an unusual pathway, termed non-hydrolytic serinolysis, in which the side chain hydroxyl group of the serine supplies its oxygen atom to form the C-terminus of the beta chain, while the remainder of the serine residue undergoes an oxidative deamination to produce ammonia and the pyruvoyl group blocking the N-terminus of the alpha chain.</text>
</comment>
<comment type="similarity">
    <text evidence="1">Belongs to the prokaryotic AdoMetDC family. Type 1 subfamily.</text>
</comment>
<organism>
    <name type="scientific">Methanococcus vannielii (strain ATCC 35089 / DSM 1224 / JCM 13029 / OCM 148 / SB)</name>
    <dbReference type="NCBI Taxonomy" id="406327"/>
    <lineage>
        <taxon>Archaea</taxon>
        <taxon>Methanobacteriati</taxon>
        <taxon>Methanobacteriota</taxon>
        <taxon>Methanomada group</taxon>
        <taxon>Methanococci</taxon>
        <taxon>Methanococcales</taxon>
        <taxon>Methanococcaceae</taxon>
        <taxon>Methanococcus</taxon>
    </lineage>
</organism>
<protein>
    <recommendedName>
        <fullName evidence="1">S-adenosylmethionine decarboxylase proenzyme</fullName>
        <shortName evidence="1">AdoMetDC</shortName>
        <shortName evidence="1">SAMDC</shortName>
        <ecNumber evidence="1">4.1.1.50</ecNumber>
    </recommendedName>
    <component>
        <recommendedName>
            <fullName evidence="1">S-adenosylmethionine decarboxylase beta chain</fullName>
        </recommendedName>
    </component>
    <component>
        <recommendedName>
            <fullName evidence="1">S-adenosylmethionine decarboxylase alpha chain</fullName>
        </recommendedName>
    </component>
</protein>
<accession>A6UQM8</accession>
<gene>
    <name evidence="1" type="primary">speH</name>
    <name type="ordered locus">Mevan_0895</name>
</gene>
<evidence type="ECO:0000255" key="1">
    <source>
        <dbReference type="HAMAP-Rule" id="MF_00464"/>
    </source>
</evidence>
<sequence>MKQLGKHIILELWGCEKQALDDQPGVEKMLVNAVKACGATLICVKTHKFSPQGVTGVAVLAESHISIHTWPELGYAAMDVFTCGEHVIPEDTIPEIRNFLKPDKVEVIDIKRGIVDIEEVLA</sequence>
<reference key="1">
    <citation type="submission" date="2007-06" db="EMBL/GenBank/DDBJ databases">
        <title>Complete sequence of Methanococcus vannielii SB.</title>
        <authorList>
            <consortium name="US DOE Joint Genome Institute"/>
            <person name="Copeland A."/>
            <person name="Lucas S."/>
            <person name="Lapidus A."/>
            <person name="Barry K."/>
            <person name="Glavina del Rio T."/>
            <person name="Dalin E."/>
            <person name="Tice H."/>
            <person name="Pitluck S."/>
            <person name="Chain P."/>
            <person name="Malfatti S."/>
            <person name="Shin M."/>
            <person name="Vergez L."/>
            <person name="Schmutz J."/>
            <person name="Larimer F."/>
            <person name="Land M."/>
            <person name="Hauser L."/>
            <person name="Kyrpides N."/>
            <person name="Anderson I."/>
            <person name="Sieprawska-Lupa M."/>
            <person name="Whitman W.B."/>
            <person name="Richardson P."/>
        </authorList>
    </citation>
    <scope>NUCLEOTIDE SEQUENCE [LARGE SCALE GENOMIC DNA]</scope>
    <source>
        <strain>ATCC 35089 / DSM 1224 / JCM 13029 / OCM 148 / SB</strain>
    </source>
</reference>
<keyword id="KW-0068">Autocatalytic cleavage</keyword>
<keyword id="KW-0210">Decarboxylase</keyword>
<keyword id="KW-0456">Lyase</keyword>
<keyword id="KW-0620">Polyamine biosynthesis</keyword>
<keyword id="KW-0670">Pyruvate</keyword>
<keyword id="KW-0949">S-adenosyl-L-methionine</keyword>
<keyword id="KW-0704">Schiff base</keyword>
<keyword id="KW-0745">Spermidine biosynthesis</keyword>
<keyword id="KW-0865">Zymogen</keyword>
<proteinExistence type="inferred from homology"/>
<dbReference type="EC" id="4.1.1.50" evidence="1"/>
<dbReference type="EMBL" id="CP000742">
    <property type="protein sequence ID" value="ABR54800.1"/>
    <property type="molecule type" value="Genomic_DNA"/>
</dbReference>
<dbReference type="RefSeq" id="WP_011972701.1">
    <property type="nucleotide sequence ID" value="NC_009634.1"/>
</dbReference>
<dbReference type="SMR" id="A6UQM8"/>
<dbReference type="STRING" id="406327.Mevan_0895"/>
<dbReference type="GeneID" id="5326156"/>
<dbReference type="KEGG" id="mvn:Mevan_0895"/>
<dbReference type="eggNOG" id="arCOG00279">
    <property type="taxonomic scope" value="Archaea"/>
</dbReference>
<dbReference type="HOGENOM" id="CLU_125470_2_3_2"/>
<dbReference type="OrthoDB" id="114016at2157"/>
<dbReference type="UniPathway" id="UPA00331">
    <property type="reaction ID" value="UER00451"/>
</dbReference>
<dbReference type="Proteomes" id="UP000001107">
    <property type="component" value="Chromosome"/>
</dbReference>
<dbReference type="GO" id="GO:0005829">
    <property type="term" value="C:cytosol"/>
    <property type="evidence" value="ECO:0007669"/>
    <property type="project" value="TreeGrafter"/>
</dbReference>
<dbReference type="GO" id="GO:0004014">
    <property type="term" value="F:adenosylmethionine decarboxylase activity"/>
    <property type="evidence" value="ECO:0007669"/>
    <property type="project" value="UniProtKB-UniRule"/>
</dbReference>
<dbReference type="GO" id="GO:0008295">
    <property type="term" value="P:spermidine biosynthetic process"/>
    <property type="evidence" value="ECO:0007669"/>
    <property type="project" value="UniProtKB-UniRule"/>
</dbReference>
<dbReference type="FunFam" id="3.30.360.110:FF:000001">
    <property type="entry name" value="S-adenosylmethionine decarboxylase proenzyme"/>
    <property type="match status" value="1"/>
</dbReference>
<dbReference type="Gene3D" id="3.30.160.750">
    <property type="match status" value="1"/>
</dbReference>
<dbReference type="Gene3D" id="3.30.360.110">
    <property type="entry name" value="S-adenosylmethionine decarboxylase domain"/>
    <property type="match status" value="1"/>
</dbReference>
<dbReference type="HAMAP" id="MF_00464">
    <property type="entry name" value="AdoMetDC_1"/>
    <property type="match status" value="1"/>
</dbReference>
<dbReference type="InterPro" id="IPR042286">
    <property type="entry name" value="AdoMetDC_C"/>
</dbReference>
<dbReference type="InterPro" id="IPR003826">
    <property type="entry name" value="AdoMetDC_fam_prok"/>
</dbReference>
<dbReference type="InterPro" id="IPR042284">
    <property type="entry name" value="AdoMetDC_N"/>
</dbReference>
<dbReference type="InterPro" id="IPR016067">
    <property type="entry name" value="S-AdoMet_deCO2ase_core"/>
</dbReference>
<dbReference type="InterPro" id="IPR017716">
    <property type="entry name" value="S-AdoMet_deCOase_pro-enz"/>
</dbReference>
<dbReference type="NCBIfam" id="TIGR03330">
    <property type="entry name" value="SAM_DCase_Bsu"/>
    <property type="match status" value="1"/>
</dbReference>
<dbReference type="PANTHER" id="PTHR33866">
    <property type="entry name" value="S-ADENOSYLMETHIONINE DECARBOXYLASE PROENZYME"/>
    <property type="match status" value="1"/>
</dbReference>
<dbReference type="PANTHER" id="PTHR33866:SF2">
    <property type="entry name" value="S-ADENOSYLMETHIONINE DECARBOXYLASE PROENZYME"/>
    <property type="match status" value="1"/>
</dbReference>
<dbReference type="Pfam" id="PF02675">
    <property type="entry name" value="AdoMet_dc"/>
    <property type="match status" value="1"/>
</dbReference>
<dbReference type="SUPFAM" id="SSF56276">
    <property type="entry name" value="S-adenosylmethionine decarboxylase"/>
    <property type="match status" value="1"/>
</dbReference>